<keyword id="KW-0325">Glycoprotein</keyword>
<keyword id="KW-0378">Hydrolase</keyword>
<keyword id="KW-0408">Iron</keyword>
<keyword id="KW-0479">Metal-binding</keyword>
<keyword id="KW-1185">Reference proteome</keyword>
<keyword id="KW-0964">Secreted</keyword>
<keyword id="KW-0732">Signal</keyword>
<keyword id="KW-0862">Zinc</keyword>
<protein>
    <recommendedName>
        <fullName>Purple acid phosphatase 22</fullName>
        <ecNumber>3.1.3.2</ecNumber>
    </recommendedName>
</protein>
<name>PPA22_ARATH</name>
<proteinExistence type="evidence at transcript level"/>
<accession>Q8S340</accession>
<accession>Q8GWZ2</accession>
<accession>Q9LXI3</accession>
<dbReference type="EC" id="3.1.3.2"/>
<dbReference type="EMBL" id="AF492668">
    <property type="protein sequence ID" value="AAM15917.1"/>
    <property type="molecule type" value="mRNA"/>
</dbReference>
<dbReference type="EMBL" id="AL353912">
    <property type="protein sequence ID" value="CAB89243.1"/>
    <property type="status" value="ALT_SEQ"/>
    <property type="molecule type" value="Genomic_DNA"/>
</dbReference>
<dbReference type="EMBL" id="CP002686">
    <property type="protein sequence ID" value="AEE78997.1"/>
    <property type="molecule type" value="Genomic_DNA"/>
</dbReference>
<dbReference type="EMBL" id="AK118546">
    <property type="protein sequence ID" value="BAC43148.1"/>
    <property type="molecule type" value="mRNA"/>
</dbReference>
<dbReference type="EMBL" id="BT006218">
    <property type="protein sequence ID" value="AAP12867.1"/>
    <property type="molecule type" value="mRNA"/>
</dbReference>
<dbReference type="PIR" id="T49035">
    <property type="entry name" value="T49035"/>
</dbReference>
<dbReference type="RefSeq" id="NP_190850.2">
    <property type="nucleotide sequence ID" value="NM_115142.5"/>
</dbReference>
<dbReference type="SMR" id="Q8S340"/>
<dbReference type="FunCoup" id="Q8S340">
    <property type="interactions" value="84"/>
</dbReference>
<dbReference type="STRING" id="3702.Q8S340"/>
<dbReference type="GlyCosmos" id="Q8S340">
    <property type="glycosylation" value="2 sites, No reported glycans"/>
</dbReference>
<dbReference type="GlyGen" id="Q8S340">
    <property type="glycosylation" value="2 sites"/>
</dbReference>
<dbReference type="PaxDb" id="3702-AT3G52820.1"/>
<dbReference type="ProteomicsDB" id="249023"/>
<dbReference type="EnsemblPlants" id="AT3G52820.1">
    <property type="protein sequence ID" value="AT3G52820.1"/>
    <property type="gene ID" value="AT3G52820"/>
</dbReference>
<dbReference type="GeneID" id="824448"/>
<dbReference type="Gramene" id="AT3G52820.1">
    <property type="protein sequence ID" value="AT3G52820.1"/>
    <property type="gene ID" value="AT3G52820"/>
</dbReference>
<dbReference type="KEGG" id="ath:AT3G52820"/>
<dbReference type="Araport" id="AT3G52820"/>
<dbReference type="TAIR" id="AT3G52820">
    <property type="gene designation" value="PAP22"/>
</dbReference>
<dbReference type="eggNOG" id="KOG1378">
    <property type="taxonomic scope" value="Eukaryota"/>
</dbReference>
<dbReference type="HOGENOM" id="CLU_013387_0_0_1"/>
<dbReference type="InParanoid" id="Q8S340"/>
<dbReference type="OMA" id="DQYRWLA"/>
<dbReference type="PhylomeDB" id="Q8S340"/>
<dbReference type="BioCyc" id="ARA:AT3G52820-MONOMER"/>
<dbReference type="PRO" id="PR:Q8S340"/>
<dbReference type="Proteomes" id="UP000006548">
    <property type="component" value="Chromosome 3"/>
</dbReference>
<dbReference type="ExpressionAtlas" id="Q8S340">
    <property type="expression patterns" value="baseline and differential"/>
</dbReference>
<dbReference type="GO" id="GO:0005576">
    <property type="term" value="C:extracellular region"/>
    <property type="evidence" value="ECO:0007669"/>
    <property type="project" value="UniProtKB-SubCell"/>
</dbReference>
<dbReference type="GO" id="GO:0003993">
    <property type="term" value="F:acid phosphatase activity"/>
    <property type="evidence" value="ECO:0000250"/>
    <property type="project" value="TAIR"/>
</dbReference>
<dbReference type="GO" id="GO:0046872">
    <property type="term" value="F:metal ion binding"/>
    <property type="evidence" value="ECO:0007669"/>
    <property type="project" value="UniProtKB-KW"/>
</dbReference>
<dbReference type="CDD" id="cd00839">
    <property type="entry name" value="MPP_PAPs"/>
    <property type="match status" value="1"/>
</dbReference>
<dbReference type="FunFam" id="2.60.40.380:FF:000001">
    <property type="entry name" value="Fe(3+)-Zn(2+) purple acid phosphatase"/>
    <property type="match status" value="1"/>
</dbReference>
<dbReference type="FunFam" id="3.60.21.10:FF:000034">
    <property type="entry name" value="Fe(3+)-Zn(2+) purple acid phosphatase"/>
    <property type="match status" value="1"/>
</dbReference>
<dbReference type="Gene3D" id="3.60.21.10">
    <property type="match status" value="1"/>
</dbReference>
<dbReference type="Gene3D" id="2.60.40.380">
    <property type="entry name" value="Purple acid phosphatase-like, N-terminal"/>
    <property type="match status" value="1"/>
</dbReference>
<dbReference type="InterPro" id="IPR004843">
    <property type="entry name" value="Calcineurin-like_PHP_ApaH"/>
</dbReference>
<dbReference type="InterPro" id="IPR029052">
    <property type="entry name" value="Metallo-depent_PP-like"/>
</dbReference>
<dbReference type="InterPro" id="IPR041792">
    <property type="entry name" value="MPP_PAP"/>
</dbReference>
<dbReference type="InterPro" id="IPR039331">
    <property type="entry name" value="PPA-like"/>
</dbReference>
<dbReference type="InterPro" id="IPR008963">
    <property type="entry name" value="Purple_acid_Pase-like_N"/>
</dbReference>
<dbReference type="InterPro" id="IPR015914">
    <property type="entry name" value="Purple_acid_Pase_N"/>
</dbReference>
<dbReference type="InterPro" id="IPR025733">
    <property type="entry name" value="Purple_acid_PPase_C_dom"/>
</dbReference>
<dbReference type="PANTHER" id="PTHR22953">
    <property type="entry name" value="ACID PHOSPHATASE RELATED"/>
    <property type="match status" value="1"/>
</dbReference>
<dbReference type="PANTHER" id="PTHR22953:SF7">
    <property type="entry name" value="PURPLE ACID PHOSPHATASE 22"/>
    <property type="match status" value="1"/>
</dbReference>
<dbReference type="Pfam" id="PF00149">
    <property type="entry name" value="Metallophos"/>
    <property type="match status" value="1"/>
</dbReference>
<dbReference type="Pfam" id="PF14008">
    <property type="entry name" value="Metallophos_C"/>
    <property type="match status" value="1"/>
</dbReference>
<dbReference type="Pfam" id="PF16656">
    <property type="entry name" value="Pur_ac_phosph_N"/>
    <property type="match status" value="1"/>
</dbReference>
<dbReference type="SUPFAM" id="SSF56300">
    <property type="entry name" value="Metallo-dependent phosphatases"/>
    <property type="match status" value="1"/>
</dbReference>
<dbReference type="SUPFAM" id="SSF49363">
    <property type="entry name" value="Purple acid phosphatase, N-terminal domain"/>
    <property type="match status" value="1"/>
</dbReference>
<gene>
    <name type="primary">PAP22</name>
    <name type="synonym">AT6</name>
    <name type="ordered locus">At3g52820</name>
    <name type="ORF">F3C22.220</name>
</gene>
<feature type="signal peptide" evidence="2">
    <location>
        <begin position="1"/>
        <end position="22"/>
    </location>
</feature>
<feature type="chain" id="PRO_0000372825" description="Purple acid phosphatase 22">
    <location>
        <begin position="23"/>
        <end position="434"/>
    </location>
</feature>
<feature type="active site" description="Proton donor" evidence="1">
    <location>
        <position position="302"/>
    </location>
</feature>
<feature type="binding site" evidence="1">
    <location>
        <position position="148"/>
    </location>
    <ligand>
        <name>Fe cation</name>
        <dbReference type="ChEBI" id="CHEBI:24875"/>
    </ligand>
</feature>
<feature type="binding site" evidence="1">
    <location>
        <position position="175"/>
    </location>
    <ligand>
        <name>Fe cation</name>
        <dbReference type="ChEBI" id="CHEBI:24875"/>
    </ligand>
</feature>
<feature type="binding site" evidence="1">
    <location>
        <position position="175"/>
    </location>
    <ligand>
        <name>Zn(2+)</name>
        <dbReference type="ChEBI" id="CHEBI:29105"/>
    </ligand>
</feature>
<feature type="binding site" evidence="1">
    <location>
        <position position="178"/>
    </location>
    <ligand>
        <name>Fe cation</name>
        <dbReference type="ChEBI" id="CHEBI:24875"/>
    </ligand>
</feature>
<feature type="binding site" evidence="1">
    <location>
        <position position="208"/>
    </location>
    <ligand>
        <name>substrate</name>
    </ligand>
</feature>
<feature type="binding site" evidence="1">
    <location>
        <position position="208"/>
    </location>
    <ligand>
        <name>Zn(2+)</name>
        <dbReference type="ChEBI" id="CHEBI:29105"/>
    </ligand>
</feature>
<feature type="binding site" evidence="1">
    <location>
        <position position="292"/>
    </location>
    <ligand>
        <name>Zn(2+)</name>
        <dbReference type="ChEBI" id="CHEBI:29105"/>
    </ligand>
</feature>
<feature type="binding site" evidence="1">
    <location>
        <begin position="329"/>
        <end position="331"/>
    </location>
    <ligand>
        <name>substrate</name>
    </ligand>
</feature>
<feature type="binding site" evidence="1">
    <location>
        <position position="329"/>
    </location>
    <ligand>
        <name>Zn(2+)</name>
        <dbReference type="ChEBI" id="CHEBI:29105"/>
    </ligand>
</feature>
<feature type="binding site" evidence="1">
    <location>
        <position position="331"/>
    </location>
    <ligand>
        <name>Fe cation</name>
        <dbReference type="ChEBI" id="CHEBI:24875"/>
    </ligand>
</feature>
<feature type="glycosylation site" description="N-linked (GlcNAc...) asparagine" evidence="2">
    <location>
        <position position="116"/>
    </location>
</feature>
<feature type="glycosylation site" description="N-linked (GlcNAc...) asparagine" evidence="2">
    <location>
        <position position="403"/>
    </location>
</feature>
<organism>
    <name type="scientific">Arabidopsis thaliana</name>
    <name type="common">Mouse-ear cress</name>
    <dbReference type="NCBI Taxonomy" id="3702"/>
    <lineage>
        <taxon>Eukaryota</taxon>
        <taxon>Viridiplantae</taxon>
        <taxon>Streptophyta</taxon>
        <taxon>Embryophyta</taxon>
        <taxon>Tracheophyta</taxon>
        <taxon>Spermatophyta</taxon>
        <taxon>Magnoliopsida</taxon>
        <taxon>eudicotyledons</taxon>
        <taxon>Gunneridae</taxon>
        <taxon>Pentapetalae</taxon>
        <taxon>rosids</taxon>
        <taxon>malvids</taxon>
        <taxon>Brassicales</taxon>
        <taxon>Brassicaceae</taxon>
        <taxon>Camelineae</taxon>
        <taxon>Arabidopsis</taxon>
    </lineage>
</organism>
<comment type="catalytic activity">
    <reaction>
        <text>a phosphate monoester + H2O = an alcohol + phosphate</text>
        <dbReference type="Rhea" id="RHEA:15017"/>
        <dbReference type="ChEBI" id="CHEBI:15377"/>
        <dbReference type="ChEBI" id="CHEBI:30879"/>
        <dbReference type="ChEBI" id="CHEBI:43474"/>
        <dbReference type="ChEBI" id="CHEBI:67140"/>
        <dbReference type="EC" id="3.1.3.2"/>
    </reaction>
</comment>
<comment type="cofactor">
    <cofactor evidence="1">
        <name>Fe cation</name>
        <dbReference type="ChEBI" id="CHEBI:24875"/>
    </cofactor>
    <text evidence="1">Binds 1 Fe cation per subunit.</text>
</comment>
<comment type="cofactor">
    <cofactor evidence="1">
        <name>Zn(2+)</name>
        <dbReference type="ChEBI" id="CHEBI:29105"/>
    </cofactor>
    <text evidence="1">Binds 1 zinc ion per subunit.</text>
</comment>
<comment type="subunit">
    <text evidence="1">Homodimer.</text>
</comment>
<comment type="subcellular location">
    <subcellularLocation>
        <location evidence="1">Secreted</location>
    </subcellularLocation>
</comment>
<comment type="tissue specificity">
    <text evidence="3">Expressed in roots, stems, leaves, flowers and siliques.</text>
</comment>
<comment type="similarity">
    <text evidence="4">Belongs to the metallophosphoesterase superfamily. Purple acid phosphatase family.</text>
</comment>
<comment type="sequence caution" evidence="4">
    <conflict type="erroneous gene model prediction">
        <sequence resource="EMBL-CDS" id="CAB89243"/>
    </conflict>
</comment>
<evidence type="ECO:0000250" key="1"/>
<evidence type="ECO:0000255" key="2"/>
<evidence type="ECO:0000269" key="3">
    <source>
    </source>
</evidence>
<evidence type="ECO:0000305" key="4"/>
<sequence length="434" mass="49357">MKLFGLFLSFTLLFLCPFISQADVPELSRQPPRPIVFVHNDRSKSDPQQVHISLAGKDHMRVTFITEDNKVESVVEYGKQPGKYDGKATGECTSYKYFFYKSGKIHHVKIGPLQANTTYYYRCGGNGPEFSFKTPPSTFPVEFAIVGDLGQTEWTAATLSHINSQDYDVFLLPGDLSYADTHQPLWDSFGRLVEPLASKRPWMVTEGNHEIEFFPIIEHTTFKSYNARWLMPHTESFSTSNLYYSFDVAGVHTVMLGSYTDFDCESDQYQWLQADLAKVDRKTTPWVVVLLHAPWYNTNEAHEGEGESMREAMESLLFNARVDVVFSGHVHAYERFKRVYNNKADPCGPIHITIGDGGNREGLALSFKKPPSPLSEFRESSFGHGRLKVMDGKRAHWSWHRNNDSNSLLADEVWLDSLSTSSSCWPSSRSNDEL</sequence>
<reference key="1">
    <citation type="journal article" date="2002" name="J. Biol. Chem.">
        <title>Purple acid phosphatases of Arabidopsis thaliana. Comparative analysis and differential regulation by phosphate deprivation.</title>
        <authorList>
            <person name="Li D."/>
            <person name="Zhu H."/>
            <person name="Liu K."/>
            <person name="Liu X."/>
            <person name="Leggewie G."/>
            <person name="Udvardi M."/>
            <person name="Wang D."/>
        </authorList>
    </citation>
    <scope>NUCLEOTIDE SEQUENCE [MRNA]</scope>
    <scope>GENE FAMILY</scope>
    <scope>NOMENCLATURE</scope>
    <source>
        <strain>cv. Col-1</strain>
    </source>
</reference>
<reference key="2">
    <citation type="journal article" date="2000" name="Nature">
        <title>Sequence and analysis of chromosome 3 of the plant Arabidopsis thaliana.</title>
        <authorList>
            <person name="Salanoubat M."/>
            <person name="Lemcke K."/>
            <person name="Rieger M."/>
            <person name="Ansorge W."/>
            <person name="Unseld M."/>
            <person name="Fartmann B."/>
            <person name="Valle G."/>
            <person name="Bloecker H."/>
            <person name="Perez-Alonso M."/>
            <person name="Obermaier B."/>
            <person name="Delseny M."/>
            <person name="Boutry M."/>
            <person name="Grivell L.A."/>
            <person name="Mache R."/>
            <person name="Puigdomenech P."/>
            <person name="De Simone V."/>
            <person name="Choisne N."/>
            <person name="Artiguenave F."/>
            <person name="Robert C."/>
            <person name="Brottier P."/>
            <person name="Wincker P."/>
            <person name="Cattolico L."/>
            <person name="Weissenbach J."/>
            <person name="Saurin W."/>
            <person name="Quetier F."/>
            <person name="Schaefer M."/>
            <person name="Mueller-Auer S."/>
            <person name="Gabel C."/>
            <person name="Fuchs M."/>
            <person name="Benes V."/>
            <person name="Wurmbach E."/>
            <person name="Drzonek H."/>
            <person name="Erfle H."/>
            <person name="Jordan N."/>
            <person name="Bangert S."/>
            <person name="Wiedelmann R."/>
            <person name="Kranz H."/>
            <person name="Voss H."/>
            <person name="Holland R."/>
            <person name="Brandt P."/>
            <person name="Nyakatura G."/>
            <person name="Vezzi A."/>
            <person name="D'Angelo M."/>
            <person name="Pallavicini A."/>
            <person name="Toppo S."/>
            <person name="Simionati B."/>
            <person name="Conrad A."/>
            <person name="Hornischer K."/>
            <person name="Kauer G."/>
            <person name="Loehnert T.-H."/>
            <person name="Nordsiek G."/>
            <person name="Reichelt J."/>
            <person name="Scharfe M."/>
            <person name="Schoen O."/>
            <person name="Bargues M."/>
            <person name="Terol J."/>
            <person name="Climent J."/>
            <person name="Navarro P."/>
            <person name="Collado C."/>
            <person name="Perez-Perez A."/>
            <person name="Ottenwaelder B."/>
            <person name="Duchemin D."/>
            <person name="Cooke R."/>
            <person name="Laudie M."/>
            <person name="Berger-Llauro C."/>
            <person name="Purnelle B."/>
            <person name="Masuy D."/>
            <person name="de Haan M."/>
            <person name="Maarse A.C."/>
            <person name="Alcaraz J.-P."/>
            <person name="Cottet A."/>
            <person name="Casacuberta E."/>
            <person name="Monfort A."/>
            <person name="Argiriou A."/>
            <person name="Flores M."/>
            <person name="Liguori R."/>
            <person name="Vitale D."/>
            <person name="Mannhaupt G."/>
            <person name="Haase D."/>
            <person name="Schoof H."/>
            <person name="Rudd S."/>
            <person name="Zaccaria P."/>
            <person name="Mewes H.-W."/>
            <person name="Mayer K.F.X."/>
            <person name="Kaul S."/>
            <person name="Town C.D."/>
            <person name="Koo H.L."/>
            <person name="Tallon L.J."/>
            <person name="Jenkins J."/>
            <person name="Rooney T."/>
            <person name="Rizzo M."/>
            <person name="Walts A."/>
            <person name="Utterback T."/>
            <person name="Fujii C.Y."/>
            <person name="Shea T.P."/>
            <person name="Creasy T.H."/>
            <person name="Haas B."/>
            <person name="Maiti R."/>
            <person name="Wu D."/>
            <person name="Peterson J."/>
            <person name="Van Aken S."/>
            <person name="Pai G."/>
            <person name="Militscher J."/>
            <person name="Sellers P."/>
            <person name="Gill J.E."/>
            <person name="Feldblyum T.V."/>
            <person name="Preuss D."/>
            <person name="Lin X."/>
            <person name="Nierman W.C."/>
            <person name="Salzberg S.L."/>
            <person name="White O."/>
            <person name="Venter J.C."/>
            <person name="Fraser C.M."/>
            <person name="Kaneko T."/>
            <person name="Nakamura Y."/>
            <person name="Sato S."/>
            <person name="Kato T."/>
            <person name="Asamizu E."/>
            <person name="Sasamoto S."/>
            <person name="Kimura T."/>
            <person name="Idesawa K."/>
            <person name="Kawashima K."/>
            <person name="Kishida Y."/>
            <person name="Kiyokawa C."/>
            <person name="Kohara M."/>
            <person name="Matsumoto M."/>
            <person name="Matsuno A."/>
            <person name="Muraki A."/>
            <person name="Nakayama S."/>
            <person name="Nakazaki N."/>
            <person name="Shinpo S."/>
            <person name="Takeuchi C."/>
            <person name="Wada T."/>
            <person name="Watanabe A."/>
            <person name="Yamada M."/>
            <person name="Yasuda M."/>
            <person name="Tabata S."/>
        </authorList>
    </citation>
    <scope>NUCLEOTIDE SEQUENCE [LARGE SCALE GENOMIC DNA]</scope>
    <source>
        <strain>cv. Columbia</strain>
    </source>
</reference>
<reference key="3">
    <citation type="journal article" date="2017" name="Plant J.">
        <title>Araport11: a complete reannotation of the Arabidopsis thaliana reference genome.</title>
        <authorList>
            <person name="Cheng C.Y."/>
            <person name="Krishnakumar V."/>
            <person name="Chan A.P."/>
            <person name="Thibaud-Nissen F."/>
            <person name="Schobel S."/>
            <person name="Town C.D."/>
        </authorList>
    </citation>
    <scope>GENOME REANNOTATION</scope>
    <source>
        <strain>cv. Columbia</strain>
    </source>
</reference>
<reference key="4">
    <citation type="journal article" date="2002" name="Science">
        <title>Functional annotation of a full-length Arabidopsis cDNA collection.</title>
        <authorList>
            <person name="Seki M."/>
            <person name="Narusaka M."/>
            <person name="Kamiya A."/>
            <person name="Ishida J."/>
            <person name="Satou M."/>
            <person name="Sakurai T."/>
            <person name="Nakajima M."/>
            <person name="Enju A."/>
            <person name="Akiyama K."/>
            <person name="Oono Y."/>
            <person name="Muramatsu M."/>
            <person name="Hayashizaki Y."/>
            <person name="Kawai J."/>
            <person name="Carninci P."/>
            <person name="Itoh M."/>
            <person name="Ishii Y."/>
            <person name="Arakawa T."/>
            <person name="Shibata K."/>
            <person name="Shinagawa A."/>
            <person name="Shinozaki K."/>
        </authorList>
    </citation>
    <scope>NUCLEOTIDE SEQUENCE [LARGE SCALE MRNA] OF 172-434</scope>
    <source>
        <strain>cv. Columbia</strain>
    </source>
</reference>
<reference key="5">
    <citation type="journal article" date="2003" name="Science">
        <title>Empirical analysis of transcriptional activity in the Arabidopsis genome.</title>
        <authorList>
            <person name="Yamada K."/>
            <person name="Lim J."/>
            <person name="Dale J.M."/>
            <person name="Chen H."/>
            <person name="Shinn P."/>
            <person name="Palm C.J."/>
            <person name="Southwick A.M."/>
            <person name="Wu H.C."/>
            <person name="Kim C.J."/>
            <person name="Nguyen M."/>
            <person name="Pham P.K."/>
            <person name="Cheuk R.F."/>
            <person name="Karlin-Newmann G."/>
            <person name="Liu S.X."/>
            <person name="Lam B."/>
            <person name="Sakano H."/>
            <person name="Wu T."/>
            <person name="Yu G."/>
            <person name="Miranda M."/>
            <person name="Quach H.L."/>
            <person name="Tripp M."/>
            <person name="Chang C.H."/>
            <person name="Lee J.M."/>
            <person name="Toriumi M.J."/>
            <person name="Chan M.M."/>
            <person name="Tang C.C."/>
            <person name="Onodera C.S."/>
            <person name="Deng J.M."/>
            <person name="Akiyama K."/>
            <person name="Ansari Y."/>
            <person name="Arakawa T."/>
            <person name="Banh J."/>
            <person name="Banno F."/>
            <person name="Bowser L."/>
            <person name="Brooks S.Y."/>
            <person name="Carninci P."/>
            <person name="Chao Q."/>
            <person name="Choy N."/>
            <person name="Enju A."/>
            <person name="Goldsmith A.D."/>
            <person name="Gurjal M."/>
            <person name="Hansen N.F."/>
            <person name="Hayashizaki Y."/>
            <person name="Johnson-Hopson C."/>
            <person name="Hsuan V.W."/>
            <person name="Iida K."/>
            <person name="Karnes M."/>
            <person name="Khan S."/>
            <person name="Koesema E."/>
            <person name="Ishida J."/>
            <person name="Jiang P.X."/>
            <person name="Jones T."/>
            <person name="Kawai J."/>
            <person name="Kamiya A."/>
            <person name="Meyers C."/>
            <person name="Nakajima M."/>
            <person name="Narusaka M."/>
            <person name="Seki M."/>
            <person name="Sakurai T."/>
            <person name="Satou M."/>
            <person name="Tamse R."/>
            <person name="Vaysberg M."/>
            <person name="Wallender E.K."/>
            <person name="Wong C."/>
            <person name="Yamamura Y."/>
            <person name="Yuan S."/>
            <person name="Shinozaki K."/>
            <person name="Davis R.W."/>
            <person name="Theologis A."/>
            <person name="Ecker J.R."/>
        </authorList>
    </citation>
    <scope>NUCLEOTIDE SEQUENCE [LARGE SCALE MRNA] OF 203-434</scope>
    <source>
        <strain>cv. Columbia</strain>
    </source>
</reference>
<reference key="6">
    <citation type="journal article" date="2005" name="Plant Mol. Biol.">
        <title>Expression patterns of purple acid phosphatase genes in Arabidopsis organs and functional analysis of AtPAP23 predominantly transcribed in flower.</title>
        <authorList>
            <person name="Zhu H."/>
            <person name="Qian W."/>
            <person name="Lu X."/>
            <person name="Li D."/>
            <person name="Liu X."/>
            <person name="Liu K."/>
            <person name="Wang D."/>
        </authorList>
    </citation>
    <scope>TISSUE SPECIFICITY</scope>
</reference>